<sequence>MDEQIVSASSNVKDGVEKQPVKDREDVDANVVPPHSTPSLPKISLISLFSIVMSLGAAAFLGALDATVVAVLTPTLAQEFHSVDAVAWYGAIYLLMSGTTQPLFGKLYNEFSPKWLFITCLIVLQLGSLVCALARNSPTFIVGRAVAGIGAGGILSGALNIVALIVPLHHRAAFTGMIGALECVALIIGPIIGGAIADNIGWRWCFWINLPIGAAVCAILLFFFHPPRSTYSASGVPRSYSEILGNLDYIGAGMIISSLVCLSLALQWGGTKYKWGDGRVVALLVVFGVLFLSASGHQYWKGEKALFPTRLLRQRGFLLSLFNGLCFGGVQYAALYYLPTWFQAIKGETRVGAGIQMLPIVGAIIGVNIVAGITISFTGRLAPFIVIATVLASVGSGLLYTFTPTKSQARIIGYQLIYGAGSGAGVQQAFIGAQAALDPADVTYASASVLLMNSMSGVITLCVCQNLFTNRINALTEVLPGVTKETLQSGFAFLRSTLTPAEFGVAIQTFNSAIQDAFLVAIVLSCASVLGWPFLSWASVKGQKKMNK</sequence>
<organism>
    <name type="scientific">Cochliobolus carbonum</name>
    <name type="common">Maize leaf spot fungus</name>
    <name type="synonym">Bipolaris zeicola</name>
    <dbReference type="NCBI Taxonomy" id="5017"/>
    <lineage>
        <taxon>Eukaryota</taxon>
        <taxon>Fungi</taxon>
        <taxon>Dikarya</taxon>
        <taxon>Ascomycota</taxon>
        <taxon>Pezizomycotina</taxon>
        <taxon>Dothideomycetes</taxon>
        <taxon>Pleosporomycetidae</taxon>
        <taxon>Pleosporales</taxon>
        <taxon>Pleosporineae</taxon>
        <taxon>Pleosporaceae</taxon>
        <taxon>Bipolaris</taxon>
    </lineage>
</organism>
<keyword id="KW-0472">Membrane</keyword>
<keyword id="KW-0812">Transmembrane</keyword>
<keyword id="KW-1133">Transmembrane helix</keyword>
<keyword id="KW-0813">Transport</keyword>
<evidence type="ECO:0000255" key="1"/>
<evidence type="ECO:0000256" key="2">
    <source>
        <dbReference type="SAM" id="MobiDB-lite"/>
    </source>
</evidence>
<evidence type="ECO:0000269" key="3">
    <source>
    </source>
</evidence>
<evidence type="ECO:0000269" key="4">
    <source>
    </source>
</evidence>
<evidence type="ECO:0000269" key="5">
    <source>
    </source>
</evidence>
<evidence type="ECO:0000303" key="6">
    <source>
    </source>
</evidence>
<evidence type="ECO:0000305" key="7"/>
<accession>Q00357</accession>
<name>TOXA_COCCA</name>
<reference key="1">
    <citation type="journal article" date="1996" name="Microbiology">
        <title>A putative cyclic peptide efflux pump encoded by the TOXA gene of the plant-pathogenic fungus Cochliobolus carbonum.</title>
        <authorList>
            <person name="Pitkin J.W."/>
            <person name="Panaccione D.G."/>
            <person name="Walton J.D."/>
        </authorList>
    </citation>
    <scope>NUCLEOTIDE SEQUENCE [GENOMIC DNA]</scope>
    <scope>FUNCTION</scope>
    <scope>DISRUPTION PHENOTYPE</scope>
    <source>
        <strain>ATCC 90305 / SB111 / 2R15</strain>
    </source>
</reference>
<reference key="2">
    <citation type="journal article" date="1996" name="Plant Cell">
        <title>Chromosomal organization of TOX2, a complex locus controlling host-selective toxin biosynthesis in Cochliobolus carbonum.</title>
        <authorList>
            <person name="Ahn J.H."/>
            <person name="Walton J.D."/>
        </authorList>
    </citation>
    <scope>IDENTIFICATION WITHIN THE TOX2 CLUSTER</scope>
    <scope>FUNCTION</scope>
</reference>
<reference key="3">
    <citation type="journal article" date="2002" name="Fungal Genet. Biol.">
        <title>An extended physical map of the TOX2 locus of Cochliobolus carbonum required for biosynthesis of HC-toxin.</title>
        <authorList>
            <person name="Ahn J.H."/>
            <person name="Cheng Y.Q."/>
            <person name="Walton J.D."/>
        </authorList>
    </citation>
    <scope>TOX2 CLUSTER ORGANIZATION</scope>
</reference>
<dbReference type="EMBL" id="L48797">
    <property type="protein sequence ID" value="AAB36607.1"/>
    <property type="molecule type" value="Genomic_DNA"/>
</dbReference>
<dbReference type="SMR" id="Q00357"/>
<dbReference type="PHI-base" id="PHI:60"/>
<dbReference type="GO" id="GO:0016020">
    <property type="term" value="C:membrane"/>
    <property type="evidence" value="ECO:0000303"/>
    <property type="project" value="UniProtKB"/>
</dbReference>
<dbReference type="GO" id="GO:0005886">
    <property type="term" value="C:plasma membrane"/>
    <property type="evidence" value="ECO:0007669"/>
    <property type="project" value="TreeGrafter"/>
</dbReference>
<dbReference type="GO" id="GO:0019534">
    <property type="term" value="F:toxin transmembrane transporter activity"/>
    <property type="evidence" value="ECO:0000303"/>
    <property type="project" value="UniProtKB"/>
</dbReference>
<dbReference type="GO" id="GO:0051701">
    <property type="term" value="P:biological process involved in interaction with host"/>
    <property type="evidence" value="ECO:0000303"/>
    <property type="project" value="UniProtKB"/>
</dbReference>
<dbReference type="CDD" id="cd17502">
    <property type="entry name" value="MFS_Azr1_MDR_like"/>
    <property type="match status" value="1"/>
</dbReference>
<dbReference type="Gene3D" id="1.20.1250.20">
    <property type="entry name" value="MFS general substrate transporter like domains"/>
    <property type="match status" value="1"/>
</dbReference>
<dbReference type="InterPro" id="IPR011701">
    <property type="entry name" value="MFS"/>
</dbReference>
<dbReference type="InterPro" id="IPR020846">
    <property type="entry name" value="MFS_dom"/>
</dbReference>
<dbReference type="InterPro" id="IPR036259">
    <property type="entry name" value="MFS_trans_sf"/>
</dbReference>
<dbReference type="PANTHER" id="PTHR23501:SF198">
    <property type="entry name" value="AZOLE RESISTANCE PROTEIN 1-RELATED"/>
    <property type="match status" value="1"/>
</dbReference>
<dbReference type="PANTHER" id="PTHR23501">
    <property type="entry name" value="MAJOR FACILITATOR SUPERFAMILY"/>
    <property type="match status" value="1"/>
</dbReference>
<dbReference type="Pfam" id="PF07690">
    <property type="entry name" value="MFS_1"/>
    <property type="match status" value="1"/>
</dbReference>
<dbReference type="SUPFAM" id="SSF103473">
    <property type="entry name" value="MFS general substrate transporter"/>
    <property type="match status" value="1"/>
</dbReference>
<dbReference type="PROSITE" id="PS50850">
    <property type="entry name" value="MFS"/>
    <property type="match status" value="1"/>
</dbReference>
<gene>
    <name evidence="6" type="primary">TOXA</name>
</gene>
<protein>
    <recommendedName>
        <fullName evidence="6">MFS-type transporter TOXA</fullName>
    </recommendedName>
    <alternativeName>
        <fullName evidence="6">TOX2 HC-toxin biosynthesis cluster protein TOXA</fullName>
    </alternativeName>
</protein>
<comment type="function">
    <text evidence="4 5">MFS-type transporter; part of the diffuse TOX2 gene cluster that mediates the biosynthesis of the HC-toxin, cyclic tetrapeptide of structure cyclo(D-Pro-L-Ala-D-Ala-L-Aeo), where Aeo stands for 2-amino-9,10-epoxi-8-oxodecanoic acid (PubMed:8672886, PubMed:8704997). HC-toxin is a determinant of specificity and virulence in the interaction between the producing fungus and its host, maize (PubMed:8704997). TOXA acts as a HC-toxin efflux pump which contributes to self-protection against HC-toxin and/or the secretion of HC-toxin into the extracellular milieu (PubMed:8704997).</text>
</comment>
<comment type="subcellular location">
    <subcellularLocation>
        <location evidence="1">Membrane</location>
        <topology evidence="1">Multi-pass membrane protein</topology>
    </subcellularLocation>
</comment>
<comment type="disruption phenotype">
    <text evidence="5">Leads to lethality.</text>
</comment>
<comment type="miscellaneous">
    <text evidence="3 4">The genes involved in HC-toxin biosynthesis, called collectively TOX2, are organized into a diffuse cluster that spans &gt;500 kb. All of the known genes are duplicated or triplicated within this region, with some variation in copy number and chromosomal location among different race 1 strains.</text>
</comment>
<comment type="similarity">
    <text evidence="7">Belongs to the major facilitator superfamily. TCR/Tet family.</text>
</comment>
<feature type="chain" id="PRO_0000173436" description="MFS-type transporter TOXA">
    <location>
        <begin position="1"/>
        <end position="548"/>
    </location>
</feature>
<feature type="transmembrane region" description="Helical" evidence="1">
    <location>
        <begin position="43"/>
        <end position="63"/>
    </location>
</feature>
<feature type="transmembrane region" description="Helical" evidence="1">
    <location>
        <begin position="85"/>
        <end position="105"/>
    </location>
</feature>
<feature type="transmembrane region" description="Helical" evidence="1">
    <location>
        <begin position="114"/>
        <end position="134"/>
    </location>
</feature>
<feature type="transmembrane region" description="Helical" evidence="1">
    <location>
        <begin position="146"/>
        <end position="166"/>
    </location>
</feature>
<feature type="transmembrane region" description="Helical" evidence="1">
    <location>
        <begin position="177"/>
        <end position="197"/>
    </location>
</feature>
<feature type="transmembrane region" description="Helical" evidence="1">
    <location>
        <begin position="204"/>
        <end position="224"/>
    </location>
</feature>
<feature type="transmembrane region" description="Helical" evidence="1">
    <location>
        <begin position="250"/>
        <end position="270"/>
    </location>
</feature>
<feature type="transmembrane region" description="Helical" evidence="1">
    <location>
        <begin position="280"/>
        <end position="300"/>
    </location>
</feature>
<feature type="transmembrane region" description="Helical" evidence="1">
    <location>
        <begin position="316"/>
        <end position="336"/>
    </location>
</feature>
<feature type="transmembrane region" description="Helical" evidence="1">
    <location>
        <begin position="357"/>
        <end position="377"/>
    </location>
</feature>
<feature type="transmembrane region" description="Helical" evidence="1">
    <location>
        <begin position="382"/>
        <end position="402"/>
    </location>
</feature>
<feature type="transmembrane region" description="Helical" evidence="1">
    <location>
        <begin position="411"/>
        <end position="431"/>
    </location>
</feature>
<feature type="transmembrane region" description="Helical" evidence="1">
    <location>
        <begin position="444"/>
        <end position="464"/>
    </location>
</feature>
<feature type="transmembrane region" description="Helical" evidence="1">
    <location>
        <begin position="518"/>
        <end position="538"/>
    </location>
</feature>
<feature type="region of interest" description="Disordered" evidence="2">
    <location>
        <begin position="1"/>
        <end position="33"/>
    </location>
</feature>
<feature type="compositionally biased region" description="Polar residues" evidence="2">
    <location>
        <begin position="1"/>
        <end position="12"/>
    </location>
</feature>
<feature type="compositionally biased region" description="Basic and acidic residues" evidence="2">
    <location>
        <begin position="14"/>
        <end position="27"/>
    </location>
</feature>
<proteinExistence type="inferred from homology"/>